<feature type="chain" id="PRO_0000220476" description="Cytochrome b6-f complex subunit 6">
    <location>
        <begin position="1"/>
        <end position="31"/>
    </location>
</feature>
<feature type="transmembrane region" description="Helical" evidence="1">
    <location>
        <begin position="4"/>
        <end position="24"/>
    </location>
</feature>
<evidence type="ECO:0000255" key="1">
    <source>
        <dbReference type="HAMAP-Rule" id="MF_00433"/>
    </source>
</evidence>
<name>PETL_SACED</name>
<protein>
    <recommendedName>
        <fullName evidence="1">Cytochrome b6-f complex subunit 6</fullName>
    </recommendedName>
    <alternativeName>
        <fullName evidence="1">Cytochrome b6-f complex subunit PetL</fullName>
    </alternativeName>
    <alternativeName>
        <fullName evidence="1">Cytochrome b6-f complex subunit VI</fullName>
    </alternativeName>
</protein>
<reference key="1">
    <citation type="journal article" date="2005" name="Theor. Appl. Genet.">
        <title>Very close relationship of the chloroplast genomes among Saccharum species.</title>
        <authorList>
            <person name="Takahashi S."/>
            <person name="Furukawa T."/>
            <person name="Asano T."/>
            <person name="Terajima Y."/>
            <person name="Shimada H."/>
            <person name="Sugimoto A."/>
            <person name="Kadowaki K."/>
        </authorList>
    </citation>
    <scope>NUCLEOTIDE SEQUENCE [GENOMIC DNA]</scope>
    <source>
        <strain>COL/PAPUA N.G/TARC/E12</strain>
        <strain>IN95-009</strain>
    </source>
</reference>
<accession>Q4QYS8</accession>
<comment type="function">
    <text evidence="1">Component of the cytochrome b6-f complex, which mediates electron transfer between photosystem II (PSII) and photosystem I (PSI), cyclic electron flow around PSI, and state transitions. PetL is important for photoautotrophic growth as well as for electron transfer efficiency and stability of the cytochrome b6-f complex.</text>
</comment>
<comment type="subunit">
    <text evidence="1">The 4 large subunits of the cytochrome b6-f complex are cytochrome b6, subunit IV (17 kDa polypeptide, PetD), cytochrome f and the Rieske protein, while the 4 small subunits are PetG, PetL, PetM and PetN. The complex functions as a dimer.</text>
</comment>
<comment type="subcellular location">
    <subcellularLocation>
        <location evidence="1">Plastid</location>
        <location evidence="1">Chloroplast thylakoid membrane</location>
        <topology evidence="1">Single-pass membrane protein</topology>
    </subcellularLocation>
</comment>
<comment type="similarity">
    <text evidence="1">Belongs to the PetL family.</text>
</comment>
<keyword id="KW-0150">Chloroplast</keyword>
<keyword id="KW-0249">Electron transport</keyword>
<keyword id="KW-0472">Membrane</keyword>
<keyword id="KW-0602">Photosynthesis</keyword>
<keyword id="KW-0934">Plastid</keyword>
<keyword id="KW-0793">Thylakoid</keyword>
<keyword id="KW-0812">Transmembrane</keyword>
<keyword id="KW-1133">Transmembrane helix</keyword>
<keyword id="KW-0813">Transport</keyword>
<organism>
    <name type="scientific">Saccharum edule</name>
    <name type="common">Vegetable cane</name>
    <dbReference type="NCBI Taxonomy" id="280846"/>
    <lineage>
        <taxon>Eukaryota</taxon>
        <taxon>Viridiplantae</taxon>
        <taxon>Streptophyta</taxon>
        <taxon>Embryophyta</taxon>
        <taxon>Tracheophyta</taxon>
        <taxon>Spermatophyta</taxon>
        <taxon>Magnoliopsida</taxon>
        <taxon>Liliopsida</taxon>
        <taxon>Poales</taxon>
        <taxon>Poaceae</taxon>
        <taxon>PACMAD clade</taxon>
        <taxon>Panicoideae</taxon>
        <taxon>Andropogonodae</taxon>
        <taxon>Andropogoneae</taxon>
        <taxon>Saccharinae</taxon>
        <taxon>Saccharum</taxon>
        <taxon>Saccharum officinarum species complex</taxon>
    </lineage>
</organism>
<dbReference type="EMBL" id="AP007058">
    <property type="protein sequence ID" value="BAE02604.1"/>
    <property type="molecule type" value="Genomic_DNA"/>
</dbReference>
<dbReference type="EMBL" id="AP007059">
    <property type="protein sequence ID" value="BAE02605.1"/>
    <property type="molecule type" value="Genomic_DNA"/>
</dbReference>
<dbReference type="SMR" id="Q4QYS8"/>
<dbReference type="GO" id="GO:0009535">
    <property type="term" value="C:chloroplast thylakoid membrane"/>
    <property type="evidence" value="ECO:0007669"/>
    <property type="project" value="UniProtKB-SubCell"/>
</dbReference>
<dbReference type="GO" id="GO:0009512">
    <property type="term" value="C:cytochrome b6f complex"/>
    <property type="evidence" value="ECO:0007669"/>
    <property type="project" value="InterPro"/>
</dbReference>
<dbReference type="GO" id="GO:0045158">
    <property type="term" value="F:electron transporter, transferring electrons within cytochrome b6/f complex of photosystem II activity"/>
    <property type="evidence" value="ECO:0007669"/>
    <property type="project" value="UniProtKB-UniRule"/>
</dbReference>
<dbReference type="GO" id="GO:0015979">
    <property type="term" value="P:photosynthesis"/>
    <property type="evidence" value="ECO:0007669"/>
    <property type="project" value="UniProtKB-KW"/>
</dbReference>
<dbReference type="HAMAP" id="MF_00433">
    <property type="entry name" value="Cytb6_f_PetL"/>
    <property type="match status" value="1"/>
</dbReference>
<dbReference type="InterPro" id="IPR007802">
    <property type="entry name" value="Cyt_b6/f_cplx_su6"/>
</dbReference>
<dbReference type="PANTHER" id="PTHR37266">
    <property type="entry name" value="CYTOCHROME B6-F COMPLEX SUBUNIT 6"/>
    <property type="match status" value="1"/>
</dbReference>
<dbReference type="PANTHER" id="PTHR37266:SF1">
    <property type="entry name" value="CYTOCHROME B6-F COMPLEX SUBUNIT 6"/>
    <property type="match status" value="1"/>
</dbReference>
<dbReference type="Pfam" id="PF05115">
    <property type="entry name" value="PetL"/>
    <property type="match status" value="1"/>
</dbReference>
<dbReference type="SUPFAM" id="SSF103436">
    <property type="entry name" value="PetL subunit of the cytochrome b6f complex"/>
    <property type="match status" value="1"/>
</dbReference>
<proteinExistence type="inferred from homology"/>
<sequence length="31" mass="3426">MLTITSYFGFLLAALTITPALFIGLNKIRLI</sequence>
<geneLocation type="chloroplast"/>
<gene>
    <name evidence="1" type="primary">petL</name>
</gene>